<sequence length="336" mass="36326">MKGKFLKVSSLFVATLTTATLVSSPAANALSSKAMDNHPQQTQSSKQQTPKIQKGGNLKPLEQREHANVILPNNDRHQITDTTNGHYAPVTYIQVEAPTGTFIASGVVVGKDTLLTNKHVVDATHGDPHALKAFPSAINQDNYPNGGFTAEQITKYSGEGDLAIVKFSPNEQNKHIGEVVKPATMSNNAETQVNQNITVTGYPGDKPVATMWESKGKITYLKGEAMQYDLSTTGGNSGSPVFNEKNEVIGIHWGGVPNEFNGAVFINENVRNFLKQNIEDIHFANDDQPNNPDNPDNPNNPDNPNNPDEPNNPDNPNNPDNPDNGDNNNSDNPDAA</sequence>
<keyword id="KW-0903">Direct protein sequencing</keyword>
<keyword id="KW-0378">Hydrolase</keyword>
<keyword id="KW-0645">Protease</keyword>
<keyword id="KW-1185">Reference proteome</keyword>
<keyword id="KW-0677">Repeat</keyword>
<keyword id="KW-0964">Secreted</keyword>
<keyword id="KW-0720">Serine protease</keyword>
<keyword id="KW-0732">Signal</keyword>
<keyword id="KW-0843">Virulence</keyword>
<keyword id="KW-0865">Zymogen</keyword>
<name>SSPA_STAA8</name>
<feature type="signal peptide" evidence="2">
    <location>
        <begin position="1"/>
        <end position="29"/>
    </location>
</feature>
<feature type="propeptide" id="PRO_0000249327" evidence="9">
    <location>
        <begin position="30"/>
        <end position="68"/>
    </location>
</feature>
<feature type="chain" id="PRO_0000249328" description="Glutamyl endopeptidase">
    <location>
        <begin position="69"/>
        <end position="336"/>
    </location>
</feature>
<feature type="repeat" description="1">
    <location>
        <begin position="289"/>
        <end position="291"/>
    </location>
</feature>
<feature type="repeat" description="2">
    <location>
        <begin position="292"/>
        <end position="294"/>
    </location>
</feature>
<feature type="repeat" description="3">
    <location>
        <begin position="295"/>
        <end position="297"/>
    </location>
</feature>
<feature type="repeat" description="4">
    <location>
        <begin position="298"/>
        <end position="300"/>
    </location>
</feature>
<feature type="repeat" description="5">
    <location>
        <begin position="301"/>
        <end position="303"/>
    </location>
</feature>
<feature type="repeat" description="6">
    <location>
        <begin position="304"/>
        <end position="306"/>
    </location>
</feature>
<feature type="repeat" description="7">
    <location>
        <begin position="310"/>
        <end position="312"/>
    </location>
</feature>
<feature type="repeat" description="8">
    <location>
        <begin position="313"/>
        <end position="315"/>
    </location>
</feature>
<feature type="repeat" description="9">
    <location>
        <begin position="316"/>
        <end position="318"/>
    </location>
</feature>
<feature type="repeat" description="10">
    <location>
        <begin position="319"/>
        <end position="321"/>
    </location>
</feature>
<feature type="repeat" description="11">
    <location>
        <begin position="322"/>
        <end position="324"/>
    </location>
</feature>
<feature type="region of interest" description="Disordered" evidence="4">
    <location>
        <begin position="34"/>
        <end position="61"/>
    </location>
</feature>
<feature type="region of interest" description="Disordered" evidence="4">
    <location>
        <begin position="283"/>
        <end position="336"/>
    </location>
</feature>
<feature type="region of interest" description="11 X 3 AA repeats of P-[DN]-N">
    <location>
        <begin position="289"/>
        <end position="324"/>
    </location>
</feature>
<feature type="compositionally biased region" description="Low complexity" evidence="4">
    <location>
        <begin position="39"/>
        <end position="51"/>
    </location>
</feature>
<feature type="compositionally biased region" description="Low complexity" evidence="4">
    <location>
        <begin position="286"/>
        <end position="336"/>
    </location>
</feature>
<feature type="active site" description="Charge relay system" evidence="3">
    <location>
        <position position="119"/>
    </location>
</feature>
<feature type="active site" description="Charge relay system" evidence="3">
    <location>
        <position position="161"/>
    </location>
</feature>
<feature type="active site" description="Charge relay system" evidence="3">
    <location>
        <position position="237"/>
    </location>
</feature>
<feature type="site" description="Cleavage; by aureolysin">
    <location>
        <begin position="68"/>
        <end position="69"/>
    </location>
</feature>
<comment type="function">
    <text evidence="5 6 8 9">Preferentially cleaves peptide bonds on the carboxyl-terminal side of aspartate and glutamate. Along with other extracellular proteases it is involved in colonization and infection of human tissues. Required for proteolytic maturation of thiol protease SspB and inactivation of SspC, an inhibitor of SspB. It is the most important protease for degradation of fibronectin-binding protein (FnBP) and surface protein A, which are involved in adherence to host cells. May also protect bacteria against host defense mechanism by cleaving the immunoglobulin classes IgG, IgA and IgM. May be involved in the stability of secreted lipases.</text>
</comment>
<comment type="catalytic activity">
    <reaction evidence="3">
        <text>Preferential cleavage: Glu-|-Xaa, Asp-|-Xaa.</text>
        <dbReference type="EC" id="3.4.21.19"/>
    </reaction>
</comment>
<comment type="subcellular location">
    <subcellularLocation>
        <location evidence="1">Secreted</location>
    </subcellularLocation>
</comment>
<comment type="induction">
    <text evidence="7 9">Expression occurs in a growth-phase-dependent manner with optimal expression at post-exponential phase. Environmental conditions such as degree of aeration and salt concentration are also important in control of transcription and processing of SspA. Up-regulated by Agr (accessory gene regulator) and repressed by sigmaB factor and SarA.</text>
</comment>
<comment type="PTM">
    <text>Proteolytically cleaved by aureolysin (aur). This cleavage leads to the activation of SspA.</text>
</comment>
<comment type="miscellaneous">
    <text>The cascade of activation of extracellular proteases proceeds from the metalloprotease aureolysin (aur), through SspA to SspB.</text>
</comment>
<comment type="similarity">
    <text evidence="10">Belongs to the peptidase S1B family.</text>
</comment>
<organism>
    <name type="scientific">Staphylococcus aureus (strain NCTC 8325 / PS 47)</name>
    <dbReference type="NCBI Taxonomy" id="93061"/>
    <lineage>
        <taxon>Bacteria</taxon>
        <taxon>Bacillati</taxon>
        <taxon>Bacillota</taxon>
        <taxon>Bacilli</taxon>
        <taxon>Bacillales</taxon>
        <taxon>Staphylococcaceae</taxon>
        <taxon>Staphylococcus</taxon>
    </lineage>
</organism>
<evidence type="ECO:0000250" key="1"/>
<evidence type="ECO:0000255" key="2"/>
<evidence type="ECO:0000255" key="3">
    <source>
        <dbReference type="PROSITE-ProRule" id="PRU10083"/>
    </source>
</evidence>
<evidence type="ECO:0000256" key="4">
    <source>
        <dbReference type="SAM" id="MobiDB-lite"/>
    </source>
</evidence>
<evidence type="ECO:0000269" key="5">
    <source>
    </source>
</evidence>
<evidence type="ECO:0000269" key="6">
    <source>
    </source>
</evidence>
<evidence type="ECO:0000269" key="7">
    <source>
    </source>
</evidence>
<evidence type="ECO:0000269" key="8">
    <source>
    </source>
</evidence>
<evidence type="ECO:0000269" key="9">
    <source>
    </source>
</evidence>
<evidence type="ECO:0000305" key="10"/>
<gene>
    <name type="primary">sspA</name>
    <name type="ordered locus">SAOUHSC_00988</name>
</gene>
<accession>Q2FZL2</accession>
<accession>P04188</accession>
<proteinExistence type="evidence at protein level"/>
<reference key="1">
    <citation type="journal article" date="2001" name="Infect. Immun.">
        <title>Description of Staphylococcus serine protease (ssp) operon in Staphylococcus aureus and nonpolar inactivation of sspA-encoded serine protease.</title>
        <authorList>
            <person name="Rice K."/>
            <person name="Peralta R."/>
            <person name="Bast D."/>
            <person name="de Azavedo J."/>
            <person name="McGavin M.J."/>
        </authorList>
    </citation>
    <scope>NUCLEOTIDE SEQUENCE [GENOMIC DNA]</scope>
    <scope>FUNCTION</scope>
</reference>
<reference key="2">
    <citation type="book" date="2006" name="Gram positive pathogens, 2nd edition">
        <title>The Staphylococcus aureus NCTC 8325 genome.</title>
        <editorList>
            <person name="Fischetti V."/>
            <person name="Novick R."/>
            <person name="Ferretti J."/>
            <person name="Portnoy D."/>
            <person name="Rood J."/>
        </editorList>
        <authorList>
            <person name="Gillaspy A.F."/>
            <person name="Worrell V."/>
            <person name="Orvis J."/>
            <person name="Roe B.A."/>
            <person name="Dyer D.W."/>
            <person name="Iandolo J.J."/>
        </authorList>
    </citation>
    <scope>NUCLEOTIDE SEQUENCE [LARGE SCALE GENOMIC DNA]</scope>
    <source>
        <strain>NCTC 8325 / PS 47</strain>
    </source>
</reference>
<reference key="3">
    <citation type="journal article" date="2004" name="Microbiology">
        <title>The role and regulation of the extracellular proteases of Staphylococcus aureus.</title>
        <authorList>
            <person name="Shaw L."/>
            <person name="Golonka E."/>
            <person name="Potempa J."/>
            <person name="Foster S.J."/>
        </authorList>
    </citation>
    <scope>PROTEIN SEQUENCE OF 69-76</scope>
    <scope>FUNCTION</scope>
    <scope>INDUCTION</scope>
</reference>
<reference key="4">
    <citation type="journal article" date="1999" name="Mol. Gen. Genet.">
        <title>Interactive regulatory pathways control virulence determinant production and stability in response to environmental conditions in Staphylococcus aureus.</title>
        <authorList>
            <person name="Lindsay J.A."/>
            <person name="Foster S.J."/>
        </authorList>
    </citation>
    <scope>REGULATION</scope>
</reference>
<reference key="5">
    <citation type="journal article" date="2001" name="Infect. Immun.">
        <title>Decreased amounts of cell wall-associated protein A and fibronectin-binding proteins in Staphylococcus aureus sarA mutants due to up-regulation of extracellular proteases.</title>
        <authorList>
            <person name="Karlsson A."/>
            <person name="Saravia-Otten P."/>
            <person name="Tegmark K."/>
            <person name="Morfeldt E."/>
            <person name="Arvidson S."/>
        </authorList>
    </citation>
    <scope>FUNCTION</scope>
</reference>
<reference key="6">
    <citation type="journal article" date="2002" name="Infect. Immun.">
        <title>Variation in extracellular protease production among clinical isolates of Staphylococcus aureus due to different levels of expression of the protease repressor sarA.</title>
        <authorList>
            <person name="Karlsson A."/>
            <person name="Arvidson S."/>
        </authorList>
    </citation>
    <scope>INDUCTION</scope>
</reference>
<reference key="7">
    <citation type="journal article" date="2002" name="J. Biol. Chem.">
        <title>Identification of a novel maturation mechanism and restricted substrate specificity for the sspB cysteine protease of Staphylococcus aureus.</title>
        <authorList>
            <person name="Massimi I."/>
            <person name="Park E."/>
            <person name="Rice K."/>
            <person name="Mueller-Esterl W."/>
            <person name="Sauder D."/>
            <person name="McGavin M.J."/>
        </authorList>
    </citation>
    <scope>FUNCTION</scope>
</reference>
<protein>
    <recommendedName>
        <fullName>Glutamyl endopeptidase</fullName>
        <ecNumber>3.4.21.19</ecNumber>
    </recommendedName>
    <alternativeName>
        <fullName>Endoproteinase Glu-C</fullName>
    </alternativeName>
    <alternativeName>
        <fullName>Staphylococcal serine proteinase</fullName>
    </alternativeName>
    <alternativeName>
        <fullName>V8 protease</fullName>
    </alternativeName>
    <alternativeName>
        <fullName>V8 proteinase</fullName>
    </alternativeName>
</protein>
<dbReference type="EC" id="3.4.21.19"/>
<dbReference type="EMBL" id="AF309515">
    <property type="protein sequence ID" value="AAG45843.1"/>
    <property type="molecule type" value="Genomic_DNA"/>
</dbReference>
<dbReference type="EMBL" id="CP000253">
    <property type="protein sequence ID" value="ABD30113.1"/>
    <property type="molecule type" value="Genomic_DNA"/>
</dbReference>
<dbReference type="RefSeq" id="WP_000676548.1">
    <property type="nucleotide sequence ID" value="NZ_LS483365.1"/>
</dbReference>
<dbReference type="RefSeq" id="YP_499541.1">
    <property type="nucleotide sequence ID" value="NC_007795.1"/>
</dbReference>
<dbReference type="SMR" id="Q2FZL2"/>
<dbReference type="STRING" id="93061.SAOUHSC_00988"/>
<dbReference type="MEROPS" id="S01.269"/>
<dbReference type="PaxDb" id="1280-SAXN108_1046"/>
<dbReference type="GeneID" id="3920389"/>
<dbReference type="KEGG" id="sao:SAOUHSC_00988"/>
<dbReference type="PATRIC" id="fig|93061.5.peg.908"/>
<dbReference type="eggNOG" id="COG3591">
    <property type="taxonomic scope" value="Bacteria"/>
</dbReference>
<dbReference type="HOGENOM" id="CLU_073589_1_0_9"/>
<dbReference type="OrthoDB" id="191045at2"/>
<dbReference type="BRENDA" id="3.4.21.19">
    <property type="organism ID" value="3352"/>
</dbReference>
<dbReference type="BRENDA" id="3.4.24.29">
    <property type="organism ID" value="3352"/>
</dbReference>
<dbReference type="PHI-base" id="PHI:11227"/>
<dbReference type="PRO" id="PR:Q2FZL2"/>
<dbReference type="Proteomes" id="UP000008816">
    <property type="component" value="Chromosome"/>
</dbReference>
<dbReference type="GO" id="GO:0005576">
    <property type="term" value="C:extracellular region"/>
    <property type="evidence" value="ECO:0007669"/>
    <property type="project" value="UniProtKB-SubCell"/>
</dbReference>
<dbReference type="GO" id="GO:0004252">
    <property type="term" value="F:serine-type endopeptidase activity"/>
    <property type="evidence" value="ECO:0007669"/>
    <property type="project" value="InterPro"/>
</dbReference>
<dbReference type="GO" id="GO:0006508">
    <property type="term" value="P:proteolysis"/>
    <property type="evidence" value="ECO:0007669"/>
    <property type="project" value="UniProtKB-KW"/>
</dbReference>
<dbReference type="Gene3D" id="2.40.10.10">
    <property type="entry name" value="Trypsin-like serine proteases"/>
    <property type="match status" value="2"/>
</dbReference>
<dbReference type="InterPro" id="IPR050966">
    <property type="entry name" value="Glutamyl_endopeptidase"/>
</dbReference>
<dbReference type="InterPro" id="IPR009003">
    <property type="entry name" value="Peptidase_S1_PA"/>
</dbReference>
<dbReference type="InterPro" id="IPR043504">
    <property type="entry name" value="Peptidase_S1_PA_chymotrypsin"/>
</dbReference>
<dbReference type="InterPro" id="IPR008256">
    <property type="entry name" value="Peptidase_S1B"/>
</dbReference>
<dbReference type="InterPro" id="IPR008353">
    <property type="entry name" value="Peptidase_S1B_tx"/>
</dbReference>
<dbReference type="InterPro" id="IPR028301">
    <property type="entry name" value="V8_his_AS"/>
</dbReference>
<dbReference type="InterPro" id="IPR000126">
    <property type="entry name" value="V8_ser_AS"/>
</dbReference>
<dbReference type="PANTHER" id="PTHR15462">
    <property type="entry name" value="SERINE PROTEASE"/>
    <property type="match status" value="1"/>
</dbReference>
<dbReference type="PANTHER" id="PTHR15462:SF8">
    <property type="entry name" value="SERINE PROTEASE"/>
    <property type="match status" value="1"/>
</dbReference>
<dbReference type="Pfam" id="PF13365">
    <property type="entry name" value="Trypsin_2"/>
    <property type="match status" value="1"/>
</dbReference>
<dbReference type="PRINTS" id="PR01774">
    <property type="entry name" value="EXFOLTOXIN"/>
</dbReference>
<dbReference type="PRINTS" id="PR00839">
    <property type="entry name" value="V8PROTEASE"/>
</dbReference>
<dbReference type="SUPFAM" id="SSF50494">
    <property type="entry name" value="Trypsin-like serine proteases"/>
    <property type="match status" value="1"/>
</dbReference>
<dbReference type="PROSITE" id="PS00672">
    <property type="entry name" value="V8_HIS"/>
    <property type="match status" value="1"/>
</dbReference>
<dbReference type="PROSITE" id="PS00673">
    <property type="entry name" value="V8_SER"/>
    <property type="match status" value="1"/>
</dbReference>